<comment type="function">
    <text evidence="1">Binds retinol and different fatty acids.</text>
</comment>
<comment type="subcellular location">
    <subcellularLocation>
        <location evidence="4">Secreted</location>
    </subcellularLocation>
</comment>
<comment type="PTM">
    <text evidence="4">Not glycosylated.</text>
</comment>
<comment type="similarity">
    <text evidence="2 5">Belongs to the fatty-acid and retinol-binding protein (FARBP) family.</text>
</comment>
<gene>
    <name evidence="6" type="primary">far-1</name>
</gene>
<organism>
    <name type="scientific">Litomosoides sigmodontis</name>
    <name type="common">Filarial nematode worm</name>
    <dbReference type="NCBI Taxonomy" id="42156"/>
    <lineage>
        <taxon>Eukaryota</taxon>
        <taxon>Metazoa</taxon>
        <taxon>Ecdysozoa</taxon>
        <taxon>Nematoda</taxon>
        <taxon>Chromadorea</taxon>
        <taxon>Rhabditida</taxon>
        <taxon>Spirurina</taxon>
        <taxon>Spiruromorpha</taxon>
        <taxon>Filarioidea</taxon>
        <taxon>Onchocercidae</taxon>
        <taxon>Litomosoides</taxon>
    </lineage>
</organism>
<feature type="signal peptide" evidence="3">
    <location>
        <begin position="1"/>
        <end position="16"/>
    </location>
</feature>
<feature type="chain" id="PRO_0000008760" description="Fatty-acid and retinol-binding protein 1" evidence="3">
    <location>
        <begin position="17"/>
        <end position="178"/>
    </location>
</feature>
<feature type="coiled-coil region" evidence="3">
    <location>
        <begin position="67"/>
        <end position="89"/>
    </location>
</feature>
<feature type="coiled-coil region" evidence="3">
    <location>
        <begin position="122"/>
        <end position="154"/>
    </location>
</feature>
<protein>
    <recommendedName>
        <fullName>Fatty-acid and retinol-binding protein 1</fullName>
    </recommendedName>
    <alternativeName>
        <fullName>Ls-FAR-1</fullName>
    </alternativeName>
</protein>
<name>FAR1_LITSI</name>
<keyword id="KW-0175">Coiled coil</keyword>
<keyword id="KW-0446">Lipid-binding</keyword>
<keyword id="KW-0683">Retinol-binding</keyword>
<keyword id="KW-0964">Secreted</keyword>
<keyword id="KW-0732">Signal</keyword>
<keyword id="KW-0845">Vitamin A</keyword>
<proteinExistence type="evidence at protein level"/>
<dbReference type="EMBL" id="AY050256">
    <property type="protein sequence ID" value="AAL33792.1"/>
    <property type="molecule type" value="mRNA"/>
</dbReference>
<dbReference type="SMR" id="Q8WT56"/>
<dbReference type="GO" id="GO:0005576">
    <property type="term" value="C:extracellular region"/>
    <property type="evidence" value="ECO:0000314"/>
    <property type="project" value="UniProtKB"/>
</dbReference>
<dbReference type="GO" id="GO:0005504">
    <property type="term" value="F:fatty acid binding"/>
    <property type="evidence" value="ECO:0000250"/>
    <property type="project" value="UniProtKB"/>
</dbReference>
<dbReference type="GO" id="GO:0016918">
    <property type="term" value="F:retinal binding"/>
    <property type="evidence" value="ECO:0007669"/>
    <property type="project" value="UniProtKB-KW"/>
</dbReference>
<dbReference type="GO" id="GO:0019841">
    <property type="term" value="F:retinol binding"/>
    <property type="evidence" value="ECO:0000250"/>
    <property type="project" value="UniProtKB"/>
</dbReference>
<dbReference type="Gene3D" id="1.20.120.1100">
    <property type="match status" value="1"/>
</dbReference>
<dbReference type="InterPro" id="IPR008632">
    <property type="entry name" value="Gp-FAR-1"/>
</dbReference>
<dbReference type="PANTHER" id="PTHR31418">
    <property type="entry name" value="FATTY-ACID AND RETINOL-BINDING PROTEIN 1"/>
    <property type="match status" value="1"/>
</dbReference>
<dbReference type="PANTHER" id="PTHR31418:SF7">
    <property type="entry name" value="FATTY-ACID AND RETINOL-BINDING PROTEIN 1"/>
    <property type="match status" value="1"/>
</dbReference>
<dbReference type="Pfam" id="PF05823">
    <property type="entry name" value="Gp-FAR-1"/>
    <property type="match status" value="1"/>
</dbReference>
<sequence>MYHQLILMALIGVIMANVVPFSMSNIPEEYKEFIPEEVKNFYKNLSIFLCQILRELASKHATFTNEDAALEALKNKSDKLYQKAVELRNFVKAKIDSLKPDAKAFVDEIIAKVRSLRPEDGQKLDMEKLKQAARDIIAKYEALNEETKEELKATFPNTTKIITNEKFKRIANSFLQKN</sequence>
<accession>Q8WT56</accession>
<evidence type="ECO:0000250" key="1"/>
<evidence type="ECO:0000250" key="2">
    <source>
        <dbReference type="UniProtKB" id="Q25619"/>
    </source>
</evidence>
<evidence type="ECO:0000255" key="3"/>
<evidence type="ECO:0000269" key="4">
    <source>
    </source>
</evidence>
<evidence type="ECO:0000305" key="5"/>
<evidence type="ECO:0000312" key="6">
    <source>
        <dbReference type="EMBL" id="AAL33792.1"/>
    </source>
</evidence>
<reference evidence="5 6" key="1">
    <citation type="journal article" date="2002" name="Mol. Biochem. Parasitol.">
        <title>The FAR proteins of filarial nematodes: secretion, glycosylation and lipid binding characteristics.</title>
        <authorList>
            <person name="Garofalo A."/>
            <person name="Klager S.L."/>
            <person name="Rowlinson M.C."/>
            <person name="Nirmalan N."/>
            <person name="Klion A.D."/>
            <person name="Allen J.E."/>
            <person name="Kennedy M.W."/>
            <person name="Bradley J.E."/>
        </authorList>
    </citation>
    <scope>NUCLEOTIDE SEQUENCE [MRNA]</scope>
    <scope>SUBCELLULAR LOCATION</scope>
    <scope>LACK OF GLYCOSYLATION</scope>
</reference>